<feature type="chain" id="PRO_1000126103" description="Glycogen synthase">
    <location>
        <begin position="1"/>
        <end position="477"/>
    </location>
</feature>
<feature type="binding site" evidence="1">
    <location>
        <position position="15"/>
    </location>
    <ligand>
        <name>ADP-alpha-D-glucose</name>
        <dbReference type="ChEBI" id="CHEBI:57498"/>
    </ligand>
</feature>
<accession>B2U4G3</accession>
<proteinExistence type="inferred from homology"/>
<sequence>MQVLHVCSEMFPLLKTGGLADVIGALPAAQIADGVDARVLLPAFPDIRRGVTDAQVVSRRDTFAGHITLLFGHYNRVGIYLIDAPHLYDRPGSPYHDTNLFAYTDNVLRFALLGWVGAEMASGLDPFWRPDVVHAHDWHAGLAPAYLAARGRPAKSVFTVHNLAYQGMFYAHHMNDIQLPWSFFNIHGLEFNGQISFLKAGLYYADHITAVSPTYTREITEPQFAYGMEGLLQQRHREGRLSGVLNGVDEKIWSPETDLLLASRYTRDTLEDKAENKRQLQIAMGLKVDDKVPLFAVVSRLTSQKGLDLVLEALPGLLEQGGQLALLGAGDPVLQEGFLAAAAEYPGQVGVQIGYHEAFSHRIMGGADVILVPSRFEPCGLTQLYGLKYGTLPLVRRTGGLADTVSDCSLENLADGVASGFVFEDSNAWSLLRAIRRAFVLWSRPSLWRFVQRQAMAMDFSWQVAAKSYRELYYRLK</sequence>
<protein>
    <recommendedName>
        <fullName evidence="1">Glycogen synthase</fullName>
        <ecNumber evidence="1">2.4.1.21</ecNumber>
    </recommendedName>
    <alternativeName>
        <fullName evidence="1">Starch [bacterial glycogen] synthase</fullName>
    </alternativeName>
</protein>
<name>GLGA_SHIB3</name>
<organism>
    <name type="scientific">Shigella boydii serotype 18 (strain CDC 3083-94 / BS512)</name>
    <dbReference type="NCBI Taxonomy" id="344609"/>
    <lineage>
        <taxon>Bacteria</taxon>
        <taxon>Pseudomonadati</taxon>
        <taxon>Pseudomonadota</taxon>
        <taxon>Gammaproteobacteria</taxon>
        <taxon>Enterobacterales</taxon>
        <taxon>Enterobacteriaceae</taxon>
        <taxon>Shigella</taxon>
    </lineage>
</organism>
<gene>
    <name evidence="1" type="primary">glgA</name>
    <name type="ordered locus">SbBS512_E3895</name>
</gene>
<reference key="1">
    <citation type="submission" date="2008-05" db="EMBL/GenBank/DDBJ databases">
        <title>Complete sequence of Shigella boydii serotype 18 strain BS512.</title>
        <authorList>
            <person name="Rasko D.A."/>
            <person name="Rosovitz M."/>
            <person name="Maurelli A.T."/>
            <person name="Myers G."/>
            <person name="Seshadri R."/>
            <person name="Cer R."/>
            <person name="Jiang L."/>
            <person name="Ravel J."/>
            <person name="Sebastian Y."/>
        </authorList>
    </citation>
    <scope>NUCLEOTIDE SEQUENCE [LARGE SCALE GENOMIC DNA]</scope>
    <source>
        <strain>CDC 3083-94 / BS512</strain>
    </source>
</reference>
<dbReference type="EC" id="2.4.1.21" evidence="1"/>
<dbReference type="EMBL" id="CP001063">
    <property type="protein sequence ID" value="ACD07674.1"/>
    <property type="molecule type" value="Genomic_DNA"/>
</dbReference>
<dbReference type="RefSeq" id="WP_001197656.1">
    <property type="nucleotide sequence ID" value="NC_010658.1"/>
</dbReference>
<dbReference type="SMR" id="B2U4G3"/>
<dbReference type="STRING" id="344609.SbBS512_E3895"/>
<dbReference type="CAZy" id="GT5">
    <property type="family name" value="Glycosyltransferase Family 5"/>
</dbReference>
<dbReference type="KEGG" id="sbc:SbBS512_E3895"/>
<dbReference type="HOGENOM" id="CLU_009583_18_2_6"/>
<dbReference type="UniPathway" id="UPA00164"/>
<dbReference type="Proteomes" id="UP000001030">
    <property type="component" value="Chromosome"/>
</dbReference>
<dbReference type="GO" id="GO:0005829">
    <property type="term" value="C:cytosol"/>
    <property type="evidence" value="ECO:0007669"/>
    <property type="project" value="TreeGrafter"/>
</dbReference>
<dbReference type="GO" id="GO:0009011">
    <property type="term" value="F:alpha-1,4-glucan glucosyltransferase (ADP-glucose donor) activity"/>
    <property type="evidence" value="ECO:0007669"/>
    <property type="project" value="UniProtKB-UniRule"/>
</dbReference>
<dbReference type="GO" id="GO:0004373">
    <property type="term" value="F:alpha-1,4-glucan glucosyltransferase (UDP-glucose donor) activity"/>
    <property type="evidence" value="ECO:0007669"/>
    <property type="project" value="InterPro"/>
</dbReference>
<dbReference type="GO" id="GO:0005978">
    <property type="term" value="P:glycogen biosynthetic process"/>
    <property type="evidence" value="ECO:0007669"/>
    <property type="project" value="UniProtKB-UniRule"/>
</dbReference>
<dbReference type="CDD" id="cd03791">
    <property type="entry name" value="GT5_Glycogen_synthase_DULL1-like"/>
    <property type="match status" value="1"/>
</dbReference>
<dbReference type="FunFam" id="3.40.50.2000:FF:000008">
    <property type="entry name" value="Glycogen synthase"/>
    <property type="match status" value="1"/>
</dbReference>
<dbReference type="FunFam" id="3.40.50.2000:FF:000011">
    <property type="entry name" value="Glycogen synthase"/>
    <property type="match status" value="1"/>
</dbReference>
<dbReference type="Gene3D" id="3.40.50.2000">
    <property type="entry name" value="Glycogen Phosphorylase B"/>
    <property type="match status" value="2"/>
</dbReference>
<dbReference type="HAMAP" id="MF_00484">
    <property type="entry name" value="Glycogen_synth"/>
    <property type="match status" value="1"/>
</dbReference>
<dbReference type="InterPro" id="IPR001296">
    <property type="entry name" value="Glyco_trans_1"/>
</dbReference>
<dbReference type="InterPro" id="IPR011835">
    <property type="entry name" value="GS/SS"/>
</dbReference>
<dbReference type="InterPro" id="IPR013534">
    <property type="entry name" value="Starch_synth_cat_dom"/>
</dbReference>
<dbReference type="NCBIfam" id="TIGR02095">
    <property type="entry name" value="glgA"/>
    <property type="match status" value="1"/>
</dbReference>
<dbReference type="NCBIfam" id="NF001899">
    <property type="entry name" value="PRK00654.1-2"/>
    <property type="match status" value="1"/>
</dbReference>
<dbReference type="PANTHER" id="PTHR45825:SF11">
    <property type="entry name" value="ALPHA AMYLASE DOMAIN-CONTAINING PROTEIN"/>
    <property type="match status" value="1"/>
</dbReference>
<dbReference type="PANTHER" id="PTHR45825">
    <property type="entry name" value="GRANULE-BOUND STARCH SYNTHASE 1, CHLOROPLASTIC/AMYLOPLASTIC"/>
    <property type="match status" value="1"/>
</dbReference>
<dbReference type="Pfam" id="PF08323">
    <property type="entry name" value="Glyco_transf_5"/>
    <property type="match status" value="1"/>
</dbReference>
<dbReference type="Pfam" id="PF00534">
    <property type="entry name" value="Glycos_transf_1"/>
    <property type="match status" value="1"/>
</dbReference>
<dbReference type="SUPFAM" id="SSF53756">
    <property type="entry name" value="UDP-Glycosyltransferase/glycogen phosphorylase"/>
    <property type="match status" value="1"/>
</dbReference>
<evidence type="ECO:0000255" key="1">
    <source>
        <dbReference type="HAMAP-Rule" id="MF_00484"/>
    </source>
</evidence>
<keyword id="KW-0320">Glycogen biosynthesis</keyword>
<keyword id="KW-0328">Glycosyltransferase</keyword>
<keyword id="KW-1185">Reference proteome</keyword>
<keyword id="KW-0808">Transferase</keyword>
<comment type="function">
    <text evidence="1">Synthesizes alpha-1,4-glucan chains using ADP-glucose.</text>
</comment>
<comment type="catalytic activity">
    <reaction evidence="1">
        <text>[(1-&gt;4)-alpha-D-glucosyl](n) + ADP-alpha-D-glucose = [(1-&gt;4)-alpha-D-glucosyl](n+1) + ADP + H(+)</text>
        <dbReference type="Rhea" id="RHEA:18189"/>
        <dbReference type="Rhea" id="RHEA-COMP:9584"/>
        <dbReference type="Rhea" id="RHEA-COMP:9587"/>
        <dbReference type="ChEBI" id="CHEBI:15378"/>
        <dbReference type="ChEBI" id="CHEBI:15444"/>
        <dbReference type="ChEBI" id="CHEBI:57498"/>
        <dbReference type="ChEBI" id="CHEBI:456216"/>
        <dbReference type="EC" id="2.4.1.21"/>
    </reaction>
</comment>
<comment type="pathway">
    <text evidence="1">Glycan biosynthesis; glycogen biosynthesis.</text>
</comment>
<comment type="similarity">
    <text evidence="1">Belongs to the glycosyltransferase 1 family. Bacterial/plant glycogen synthase subfamily.</text>
</comment>